<gene>
    <name type="ORF">SPAC6F6.13c</name>
</gene>
<accession>O14244</accession>
<dbReference type="EMBL" id="CU329670">
    <property type="protein sequence ID" value="CAB11736.1"/>
    <property type="molecule type" value="Genomic_DNA"/>
</dbReference>
<dbReference type="PIR" id="T39047">
    <property type="entry name" value="T39047"/>
</dbReference>
<dbReference type="RefSeq" id="NP_593906.1">
    <property type="nucleotide sequence ID" value="NM_001019336.2"/>
</dbReference>
<dbReference type="BioGRID" id="278596">
    <property type="interactions" value="3"/>
</dbReference>
<dbReference type="FunCoup" id="O14244">
    <property type="interactions" value="3"/>
</dbReference>
<dbReference type="STRING" id="284812.O14244"/>
<dbReference type="ESTHER" id="schpo-yeld">
    <property type="family name" value="Duf_726"/>
</dbReference>
<dbReference type="PaxDb" id="4896-SPAC6F6.13c.1"/>
<dbReference type="EnsemblFungi" id="SPAC6F6.13c.1">
    <property type="protein sequence ID" value="SPAC6F6.13c.1:pep"/>
    <property type="gene ID" value="SPAC6F6.13c"/>
</dbReference>
<dbReference type="KEGG" id="spo:2542120"/>
<dbReference type="PomBase" id="SPAC6F6.13c"/>
<dbReference type="VEuPathDB" id="FungiDB:SPAC6F6.13c"/>
<dbReference type="eggNOG" id="KOG2385">
    <property type="taxonomic scope" value="Eukaryota"/>
</dbReference>
<dbReference type="HOGENOM" id="CLU_001695_2_0_1"/>
<dbReference type="InParanoid" id="O14244"/>
<dbReference type="OMA" id="WYRGECK"/>
<dbReference type="PhylomeDB" id="O14244"/>
<dbReference type="PRO" id="PR:O14244"/>
<dbReference type="Proteomes" id="UP000002485">
    <property type="component" value="Chromosome I"/>
</dbReference>
<dbReference type="GO" id="GO:0005737">
    <property type="term" value="C:cytoplasm"/>
    <property type="evidence" value="ECO:0007005"/>
    <property type="project" value="PomBase"/>
</dbReference>
<dbReference type="GO" id="GO:0005794">
    <property type="term" value="C:Golgi apparatus"/>
    <property type="evidence" value="ECO:0007005"/>
    <property type="project" value="PomBase"/>
</dbReference>
<dbReference type="GO" id="GO:0000139">
    <property type="term" value="C:Golgi membrane"/>
    <property type="evidence" value="ECO:0007669"/>
    <property type="project" value="UniProtKB-SubCell"/>
</dbReference>
<dbReference type="GO" id="GO:0035650">
    <property type="term" value="F:AP-1 adaptor complex binding"/>
    <property type="evidence" value="ECO:0000266"/>
    <property type="project" value="PomBase"/>
</dbReference>
<dbReference type="GO" id="GO:0016787">
    <property type="term" value="F:hydrolase activity"/>
    <property type="evidence" value="ECO:0000255"/>
    <property type="project" value="PomBase"/>
</dbReference>
<dbReference type="GO" id="GO:0035652">
    <property type="term" value="P:clathrin-coated vesicle cargo loading"/>
    <property type="evidence" value="ECO:0000266"/>
    <property type="project" value="PomBase"/>
</dbReference>
<dbReference type="InterPro" id="IPR029058">
    <property type="entry name" value="AB_hydrolase_fold"/>
</dbReference>
<dbReference type="InterPro" id="IPR007941">
    <property type="entry name" value="DUF726"/>
</dbReference>
<dbReference type="PANTHER" id="PTHR17920:SF3">
    <property type="entry name" value="TRANSMEMBRANE AND COILED-COIL DOMAIN-CONTAINING PROTEIN 4"/>
    <property type="match status" value="1"/>
</dbReference>
<dbReference type="PANTHER" id="PTHR17920">
    <property type="entry name" value="TRANSMEMBRANE AND COILED-COIL DOMAIN-CONTAINING PROTEIN 4 TMCO4"/>
    <property type="match status" value="1"/>
</dbReference>
<dbReference type="Pfam" id="PF05277">
    <property type="entry name" value="DUF726"/>
    <property type="match status" value="1"/>
</dbReference>
<dbReference type="SUPFAM" id="SSF53474">
    <property type="entry name" value="alpha/beta-Hydrolases"/>
    <property type="match status" value="1"/>
</dbReference>
<name>YELD_SCHPO</name>
<protein>
    <recommendedName>
        <fullName>Uncharacterized membrane protein C6F6.13c</fullName>
    </recommendedName>
</protein>
<feature type="chain" id="PRO_0000340087" description="Uncharacterized membrane protein C6F6.13c">
    <location>
        <begin position="1"/>
        <end position="778"/>
    </location>
</feature>
<feature type="transmembrane region" description="Helical" evidence="1">
    <location>
        <begin position="356"/>
        <end position="381"/>
    </location>
</feature>
<feature type="transmembrane region" description="Helical" evidence="1">
    <location>
        <begin position="401"/>
        <end position="423"/>
    </location>
</feature>
<feature type="region of interest" description="Disordered" evidence="2">
    <location>
        <begin position="1"/>
        <end position="60"/>
    </location>
</feature>
<feature type="compositionally biased region" description="Polar residues" evidence="2">
    <location>
        <begin position="1"/>
        <end position="11"/>
    </location>
</feature>
<feature type="compositionally biased region" description="Polar residues" evidence="2">
    <location>
        <begin position="18"/>
        <end position="34"/>
    </location>
</feature>
<feature type="compositionally biased region" description="Polar residues" evidence="2">
    <location>
        <begin position="41"/>
        <end position="51"/>
    </location>
</feature>
<sequence length="778" mass="86129">MPISSPGTRCSSDLKDPTLQQYSAESVSTEQSLGTFEESKGSITENYVQDSSVDEHDDGNWQPMEVISLEPTHLINDIDDDNEIIEEKKETEKVEESELEPRYTRVFRDEDDDQKHQLDSEAIKLLDIADHGNEEISMDSQLEITGNILSETEKMAYAGVCRLLILKMVDKIACFTTLPWYRGECKAALEDTIMWADKTTSCIYEHLGVTVEEQKMIENLHKHSVQIDDLSKILVSAHRAQTVSSLDAVLVDEVESSDSLSSLGKEKPVQIDVRWTVLCDLFLVLISKSLYDCRSRSLLMAVGEVLDINEFDVAKFEKHIVETIQIDDTGELEAGSSANTEAVMKLRRKVSRRKKYILMGLAGIGGGLVIGLSSGLLAPIISAGIGAAFTTVGLSGVATSGFLAGGGSAALITAGGAISGAHIGTTGMAHRKADVKTFEFRPLHAQRRANVIVTVSGWMLSKEDDVRLSFATLDPIVGDIYSVFWEPEMLASAGQTMNILATEVVTQSLQQVLGSTVLVSLMGALQWPLILTKLGYLIDNPWNNSLDRAKATGQLLADMLCYRSLGVRPVTLVGYSLGARVIYYCLRELEKKKEFSIIENVYLFGTPVIFKRTSWLKAASVVSGRFVNGYKKNDWILGYLFRATSGGIGRVAGLRQIDCIPGIENIDVTNLVSGHLAYRESMPILLAAVGFEVLDEEVDLVSEPIPEPLRERQSQLLYEIEAEECQNKQKELIEKSLMQKGRSLSPKKSNAFFDSKKIREELKKVKKKYGSSFNSRWY</sequence>
<organism>
    <name type="scientific">Schizosaccharomyces pombe (strain 972 / ATCC 24843)</name>
    <name type="common">Fission yeast</name>
    <dbReference type="NCBI Taxonomy" id="284812"/>
    <lineage>
        <taxon>Eukaryota</taxon>
        <taxon>Fungi</taxon>
        <taxon>Dikarya</taxon>
        <taxon>Ascomycota</taxon>
        <taxon>Taphrinomycotina</taxon>
        <taxon>Schizosaccharomycetes</taxon>
        <taxon>Schizosaccharomycetales</taxon>
        <taxon>Schizosaccharomycetaceae</taxon>
        <taxon>Schizosaccharomyces</taxon>
    </lineage>
</organism>
<proteinExistence type="inferred from homology"/>
<reference key="1">
    <citation type="journal article" date="2002" name="Nature">
        <title>The genome sequence of Schizosaccharomyces pombe.</title>
        <authorList>
            <person name="Wood V."/>
            <person name="Gwilliam R."/>
            <person name="Rajandream M.A."/>
            <person name="Lyne M.H."/>
            <person name="Lyne R."/>
            <person name="Stewart A."/>
            <person name="Sgouros J.G."/>
            <person name="Peat N."/>
            <person name="Hayles J."/>
            <person name="Baker S.G."/>
            <person name="Basham D."/>
            <person name="Bowman S."/>
            <person name="Brooks K."/>
            <person name="Brown D."/>
            <person name="Brown S."/>
            <person name="Chillingworth T."/>
            <person name="Churcher C.M."/>
            <person name="Collins M."/>
            <person name="Connor R."/>
            <person name="Cronin A."/>
            <person name="Davis P."/>
            <person name="Feltwell T."/>
            <person name="Fraser A."/>
            <person name="Gentles S."/>
            <person name="Goble A."/>
            <person name="Hamlin N."/>
            <person name="Harris D.E."/>
            <person name="Hidalgo J."/>
            <person name="Hodgson G."/>
            <person name="Holroyd S."/>
            <person name="Hornsby T."/>
            <person name="Howarth S."/>
            <person name="Huckle E.J."/>
            <person name="Hunt S."/>
            <person name="Jagels K."/>
            <person name="James K.D."/>
            <person name="Jones L."/>
            <person name="Jones M."/>
            <person name="Leather S."/>
            <person name="McDonald S."/>
            <person name="McLean J."/>
            <person name="Mooney P."/>
            <person name="Moule S."/>
            <person name="Mungall K.L."/>
            <person name="Murphy L.D."/>
            <person name="Niblett D."/>
            <person name="Odell C."/>
            <person name="Oliver K."/>
            <person name="O'Neil S."/>
            <person name="Pearson D."/>
            <person name="Quail M.A."/>
            <person name="Rabbinowitsch E."/>
            <person name="Rutherford K.M."/>
            <person name="Rutter S."/>
            <person name="Saunders D."/>
            <person name="Seeger K."/>
            <person name="Sharp S."/>
            <person name="Skelton J."/>
            <person name="Simmonds M.N."/>
            <person name="Squares R."/>
            <person name="Squares S."/>
            <person name="Stevens K."/>
            <person name="Taylor K."/>
            <person name="Taylor R.G."/>
            <person name="Tivey A."/>
            <person name="Walsh S.V."/>
            <person name="Warren T."/>
            <person name="Whitehead S."/>
            <person name="Woodward J.R."/>
            <person name="Volckaert G."/>
            <person name="Aert R."/>
            <person name="Robben J."/>
            <person name="Grymonprez B."/>
            <person name="Weltjens I."/>
            <person name="Vanstreels E."/>
            <person name="Rieger M."/>
            <person name="Schaefer M."/>
            <person name="Mueller-Auer S."/>
            <person name="Gabel C."/>
            <person name="Fuchs M."/>
            <person name="Duesterhoeft A."/>
            <person name="Fritzc C."/>
            <person name="Holzer E."/>
            <person name="Moestl D."/>
            <person name="Hilbert H."/>
            <person name="Borzym K."/>
            <person name="Langer I."/>
            <person name="Beck A."/>
            <person name="Lehrach H."/>
            <person name="Reinhardt R."/>
            <person name="Pohl T.M."/>
            <person name="Eger P."/>
            <person name="Zimmermann W."/>
            <person name="Wedler H."/>
            <person name="Wambutt R."/>
            <person name="Purnelle B."/>
            <person name="Goffeau A."/>
            <person name="Cadieu E."/>
            <person name="Dreano S."/>
            <person name="Gloux S."/>
            <person name="Lelaure V."/>
            <person name="Mottier S."/>
            <person name="Galibert F."/>
            <person name="Aves S.J."/>
            <person name="Xiang Z."/>
            <person name="Hunt C."/>
            <person name="Moore K."/>
            <person name="Hurst S.M."/>
            <person name="Lucas M."/>
            <person name="Rochet M."/>
            <person name="Gaillardin C."/>
            <person name="Tallada V.A."/>
            <person name="Garzon A."/>
            <person name="Thode G."/>
            <person name="Daga R.R."/>
            <person name="Cruzado L."/>
            <person name="Jimenez J."/>
            <person name="Sanchez M."/>
            <person name="del Rey F."/>
            <person name="Benito J."/>
            <person name="Dominguez A."/>
            <person name="Revuelta J.L."/>
            <person name="Moreno S."/>
            <person name="Armstrong J."/>
            <person name="Forsburg S.L."/>
            <person name="Cerutti L."/>
            <person name="Lowe T."/>
            <person name="McCombie W.R."/>
            <person name="Paulsen I."/>
            <person name="Potashkin J."/>
            <person name="Shpakovski G.V."/>
            <person name="Ussery D."/>
            <person name="Barrell B.G."/>
            <person name="Nurse P."/>
        </authorList>
    </citation>
    <scope>NUCLEOTIDE SEQUENCE [LARGE SCALE GENOMIC DNA]</scope>
    <source>
        <strain>972 / ATCC 24843</strain>
    </source>
</reference>
<reference key="2">
    <citation type="journal article" date="2006" name="Nat. Biotechnol.">
        <title>ORFeome cloning and global analysis of protein localization in the fission yeast Schizosaccharomyces pombe.</title>
        <authorList>
            <person name="Matsuyama A."/>
            <person name="Arai R."/>
            <person name="Yashiroda Y."/>
            <person name="Shirai A."/>
            <person name="Kamata A."/>
            <person name="Sekido S."/>
            <person name="Kobayashi Y."/>
            <person name="Hashimoto A."/>
            <person name="Hamamoto M."/>
            <person name="Hiraoka Y."/>
            <person name="Horinouchi S."/>
            <person name="Yoshida M."/>
        </authorList>
    </citation>
    <scope>SUBCELLULAR LOCATION [LARGE SCALE ANALYSIS]</scope>
</reference>
<evidence type="ECO:0000255" key="1"/>
<evidence type="ECO:0000256" key="2">
    <source>
        <dbReference type="SAM" id="MobiDB-lite"/>
    </source>
</evidence>
<evidence type="ECO:0000269" key="3">
    <source>
    </source>
</evidence>
<evidence type="ECO:0000305" key="4"/>
<comment type="subcellular location">
    <subcellularLocation>
        <location evidence="3">Golgi apparatus membrane</location>
        <topology evidence="3">Multi-pass membrane protein</topology>
    </subcellularLocation>
</comment>
<comment type="similarity">
    <text evidence="4">Belongs to the TMCO4 family.</text>
</comment>
<keyword id="KW-0333">Golgi apparatus</keyword>
<keyword id="KW-0472">Membrane</keyword>
<keyword id="KW-1185">Reference proteome</keyword>
<keyword id="KW-0812">Transmembrane</keyword>
<keyword id="KW-1133">Transmembrane helix</keyword>